<protein>
    <recommendedName>
        <fullName evidence="1">Ribosomal RNA large subunit methyltransferase F</fullName>
        <ecNumber evidence="1">2.1.1.181</ecNumber>
    </recommendedName>
    <alternativeName>
        <fullName evidence="1">23S rRNA mA1618 methyltransferase</fullName>
    </alternativeName>
    <alternativeName>
        <fullName evidence="1">rRNA adenine N-6-methyltransferase</fullName>
    </alternativeName>
</protein>
<comment type="function">
    <text evidence="1">Specifically methylates the adenine in position 1618 of 23S rRNA.</text>
</comment>
<comment type="catalytic activity">
    <reaction evidence="1">
        <text>adenosine(1618) in 23S rRNA + S-adenosyl-L-methionine = N(6)-methyladenosine(1618) in 23S rRNA + S-adenosyl-L-homocysteine + H(+)</text>
        <dbReference type="Rhea" id="RHEA:16497"/>
        <dbReference type="Rhea" id="RHEA-COMP:10229"/>
        <dbReference type="Rhea" id="RHEA-COMP:10231"/>
        <dbReference type="ChEBI" id="CHEBI:15378"/>
        <dbReference type="ChEBI" id="CHEBI:57856"/>
        <dbReference type="ChEBI" id="CHEBI:59789"/>
        <dbReference type="ChEBI" id="CHEBI:74411"/>
        <dbReference type="ChEBI" id="CHEBI:74449"/>
        <dbReference type="EC" id="2.1.1.181"/>
    </reaction>
</comment>
<comment type="subcellular location">
    <subcellularLocation>
        <location evidence="1">Cytoplasm</location>
    </subcellularLocation>
</comment>
<comment type="similarity">
    <text evidence="1">Belongs to the methyltransferase superfamily. METTL16/RlmF family.</text>
</comment>
<dbReference type="EC" id="2.1.1.181" evidence="1"/>
<dbReference type="EMBL" id="CP000826">
    <property type="protein sequence ID" value="ABV40574.1"/>
    <property type="molecule type" value="Genomic_DNA"/>
</dbReference>
<dbReference type="SMR" id="A8GBT4"/>
<dbReference type="STRING" id="399741.Spro_1470"/>
<dbReference type="KEGG" id="spe:Spro_1470"/>
<dbReference type="eggNOG" id="COG3129">
    <property type="taxonomic scope" value="Bacteria"/>
</dbReference>
<dbReference type="HOGENOM" id="CLU_027534_3_0_6"/>
<dbReference type="OrthoDB" id="1115728at2"/>
<dbReference type="GO" id="GO:0005737">
    <property type="term" value="C:cytoplasm"/>
    <property type="evidence" value="ECO:0007669"/>
    <property type="project" value="UniProtKB-SubCell"/>
</dbReference>
<dbReference type="GO" id="GO:0052907">
    <property type="term" value="F:23S rRNA (adenine(1618)-N(6))-methyltransferase activity"/>
    <property type="evidence" value="ECO:0007669"/>
    <property type="project" value="UniProtKB-EC"/>
</dbReference>
<dbReference type="GO" id="GO:0070475">
    <property type="term" value="P:rRNA base methylation"/>
    <property type="evidence" value="ECO:0007669"/>
    <property type="project" value="TreeGrafter"/>
</dbReference>
<dbReference type="CDD" id="cd02440">
    <property type="entry name" value="AdoMet_MTases"/>
    <property type="match status" value="1"/>
</dbReference>
<dbReference type="FunFam" id="3.40.50.150:FF:000045">
    <property type="entry name" value="Ribosomal RNA large subunit methyltransferase F"/>
    <property type="match status" value="1"/>
</dbReference>
<dbReference type="Gene3D" id="3.40.50.150">
    <property type="entry name" value="Vaccinia Virus protein VP39"/>
    <property type="match status" value="1"/>
</dbReference>
<dbReference type="HAMAP" id="MF_01848">
    <property type="entry name" value="23SrRNA_methyltr_F"/>
    <property type="match status" value="1"/>
</dbReference>
<dbReference type="InterPro" id="IPR010286">
    <property type="entry name" value="METTL16/RlmF"/>
</dbReference>
<dbReference type="InterPro" id="IPR016909">
    <property type="entry name" value="rRNA_lsu_MeTfrase_F"/>
</dbReference>
<dbReference type="InterPro" id="IPR029063">
    <property type="entry name" value="SAM-dependent_MTases_sf"/>
</dbReference>
<dbReference type="NCBIfam" id="NF008725">
    <property type="entry name" value="PRK11727.1"/>
    <property type="match status" value="1"/>
</dbReference>
<dbReference type="PANTHER" id="PTHR13393:SF0">
    <property type="entry name" value="RNA N6-ADENOSINE-METHYLTRANSFERASE METTL16"/>
    <property type="match status" value="1"/>
</dbReference>
<dbReference type="PANTHER" id="PTHR13393">
    <property type="entry name" value="SAM-DEPENDENT METHYLTRANSFERASE"/>
    <property type="match status" value="1"/>
</dbReference>
<dbReference type="Pfam" id="PF05971">
    <property type="entry name" value="Methyltransf_10"/>
    <property type="match status" value="1"/>
</dbReference>
<dbReference type="PIRSF" id="PIRSF029038">
    <property type="entry name" value="Mtase_YbiN_prd"/>
    <property type="match status" value="1"/>
</dbReference>
<dbReference type="SUPFAM" id="SSF53335">
    <property type="entry name" value="S-adenosyl-L-methionine-dependent methyltransferases"/>
    <property type="match status" value="1"/>
</dbReference>
<organism>
    <name type="scientific">Serratia proteamaculans (strain 568)</name>
    <dbReference type="NCBI Taxonomy" id="399741"/>
    <lineage>
        <taxon>Bacteria</taxon>
        <taxon>Pseudomonadati</taxon>
        <taxon>Pseudomonadota</taxon>
        <taxon>Gammaproteobacteria</taxon>
        <taxon>Enterobacterales</taxon>
        <taxon>Yersiniaceae</taxon>
        <taxon>Serratia</taxon>
    </lineage>
</organism>
<proteinExistence type="inferred from homology"/>
<reference key="1">
    <citation type="submission" date="2007-09" db="EMBL/GenBank/DDBJ databases">
        <title>Complete sequence of chromosome of Serratia proteamaculans 568.</title>
        <authorList>
            <consortium name="US DOE Joint Genome Institute"/>
            <person name="Copeland A."/>
            <person name="Lucas S."/>
            <person name="Lapidus A."/>
            <person name="Barry K."/>
            <person name="Glavina del Rio T."/>
            <person name="Dalin E."/>
            <person name="Tice H."/>
            <person name="Pitluck S."/>
            <person name="Chain P."/>
            <person name="Malfatti S."/>
            <person name="Shin M."/>
            <person name="Vergez L."/>
            <person name="Schmutz J."/>
            <person name="Larimer F."/>
            <person name="Land M."/>
            <person name="Hauser L."/>
            <person name="Kyrpides N."/>
            <person name="Kim E."/>
            <person name="Taghavi S."/>
            <person name="Newman L."/>
            <person name="Vangronsveld J."/>
            <person name="van der Lelie D."/>
            <person name="Richardson P."/>
        </authorList>
    </citation>
    <scope>NUCLEOTIDE SEQUENCE [LARGE SCALE GENOMIC DNA]</scope>
    <source>
        <strain>568</strain>
    </source>
</reference>
<accession>A8GBT4</accession>
<keyword id="KW-0963">Cytoplasm</keyword>
<keyword id="KW-0489">Methyltransferase</keyword>
<keyword id="KW-0698">rRNA processing</keyword>
<keyword id="KW-0949">S-adenosyl-L-methionine</keyword>
<keyword id="KW-0808">Transferase</keyword>
<name>RLMF_SERP5</name>
<sequence length="336" mass="37640">MVSYVPEIPLREPVTVEKKKSFPQQKSGLHPRNRHRSRYDFPALIASCPALEPFVKPNAWGDISVDFADPAAVKMLNRALLQHFYGIEHWDIPADYLCPPIPGRADYLHHLADLLATSNDGEIPRGKGVAILDVGIGANCIYPIVGLREYGWRFTGSEIDPVSLNSAKMIVEMNPTLRNSVRLRLQKQPEFIFNGIIGVAEKFDATLCNPPFHGSEQEAQASTRRKLHKLGKGEVADKPVQNFGGKNNELWCEGGEEAFVRKMVEESVSKAQNCLWFTSLISKHTTLPSIYHAAKLAGVAEVRTIEMAQGQKISRFVAWTFHDAEQQAAWAAERWR</sequence>
<evidence type="ECO:0000255" key="1">
    <source>
        <dbReference type="HAMAP-Rule" id="MF_01848"/>
    </source>
</evidence>
<gene>
    <name evidence="1" type="primary">rlmF</name>
    <name type="ordered locus">Spro_1470</name>
</gene>
<feature type="chain" id="PRO_0000349949" description="Ribosomal RNA large subunit methyltransferase F">
    <location>
        <begin position="1"/>
        <end position="336"/>
    </location>
</feature>